<proteinExistence type="evidence at protein level"/>
<feature type="chain" id="PRO_0000146235" description="Small ribosomal subunit protein uS12">
    <location>
        <begin position="1"/>
        <end position="135"/>
    </location>
</feature>
<feature type="region of interest" description="Disordered" evidence="2">
    <location>
        <begin position="108"/>
        <end position="135"/>
    </location>
</feature>
<feature type="compositionally biased region" description="Basic residues" evidence="2">
    <location>
        <begin position="111"/>
        <end position="122"/>
    </location>
</feature>
<feature type="compositionally biased region" description="Basic and acidic residues" evidence="2">
    <location>
        <begin position="123"/>
        <end position="135"/>
    </location>
</feature>
<feature type="modified residue" description="3-methylthioaspartic acid" evidence="1">
    <location>
        <position position="89"/>
    </location>
</feature>
<feature type="sequence variant" description="In strain: CCUG 17874; streptomycin resistant.">
    <original>K</original>
    <variation>R</variation>
    <location>
        <position position="43"/>
    </location>
</feature>
<dbReference type="EMBL" id="AE000511">
    <property type="protein sequence ID" value="AAD08241.1"/>
    <property type="molecule type" value="Genomic_DNA"/>
</dbReference>
<dbReference type="EMBL" id="U96106">
    <property type="protein sequence ID" value="AAD00825.1"/>
    <property type="molecule type" value="Genomic_DNA"/>
</dbReference>
<dbReference type="PIR" id="E64669">
    <property type="entry name" value="E64669"/>
</dbReference>
<dbReference type="RefSeq" id="NP_207988.1">
    <property type="nucleotide sequence ID" value="NC_000915.1"/>
</dbReference>
<dbReference type="RefSeq" id="WP_001142321.1">
    <property type="nucleotide sequence ID" value="NC_018939.1"/>
</dbReference>
<dbReference type="SMR" id="P0A0X4"/>
<dbReference type="FunCoup" id="P0A0X4">
    <property type="interactions" value="369"/>
</dbReference>
<dbReference type="IntAct" id="P0A0X4">
    <property type="interactions" value="3"/>
</dbReference>
<dbReference type="MINT" id="P0A0X4"/>
<dbReference type="STRING" id="85962.HP_1197"/>
<dbReference type="PaxDb" id="85962-C694_06190"/>
<dbReference type="EnsemblBacteria" id="AAD08241">
    <property type="protein sequence ID" value="AAD08241"/>
    <property type="gene ID" value="HP_1197"/>
</dbReference>
<dbReference type="GeneID" id="93237675"/>
<dbReference type="KEGG" id="heo:C694_06190"/>
<dbReference type="KEGG" id="hpy:HP_1197"/>
<dbReference type="PATRIC" id="fig|85962.47.peg.1286"/>
<dbReference type="eggNOG" id="COG0048">
    <property type="taxonomic scope" value="Bacteria"/>
</dbReference>
<dbReference type="InParanoid" id="P0A0X4"/>
<dbReference type="OrthoDB" id="9802366at2"/>
<dbReference type="PhylomeDB" id="P0A0X4"/>
<dbReference type="Proteomes" id="UP000000429">
    <property type="component" value="Chromosome"/>
</dbReference>
<dbReference type="GO" id="GO:0005840">
    <property type="term" value="C:ribosome"/>
    <property type="evidence" value="ECO:0000318"/>
    <property type="project" value="GO_Central"/>
</dbReference>
<dbReference type="GO" id="GO:0015935">
    <property type="term" value="C:small ribosomal subunit"/>
    <property type="evidence" value="ECO:0007669"/>
    <property type="project" value="InterPro"/>
</dbReference>
<dbReference type="GO" id="GO:0019843">
    <property type="term" value="F:rRNA binding"/>
    <property type="evidence" value="ECO:0007669"/>
    <property type="project" value="UniProtKB-UniRule"/>
</dbReference>
<dbReference type="GO" id="GO:0003735">
    <property type="term" value="F:structural constituent of ribosome"/>
    <property type="evidence" value="ECO:0000318"/>
    <property type="project" value="GO_Central"/>
</dbReference>
<dbReference type="GO" id="GO:0000049">
    <property type="term" value="F:tRNA binding"/>
    <property type="evidence" value="ECO:0007669"/>
    <property type="project" value="UniProtKB-UniRule"/>
</dbReference>
<dbReference type="GO" id="GO:0046677">
    <property type="term" value="P:response to antibiotic"/>
    <property type="evidence" value="ECO:0007669"/>
    <property type="project" value="UniProtKB-KW"/>
</dbReference>
<dbReference type="GO" id="GO:0006412">
    <property type="term" value="P:translation"/>
    <property type="evidence" value="ECO:0000318"/>
    <property type="project" value="GO_Central"/>
</dbReference>
<dbReference type="CDD" id="cd03368">
    <property type="entry name" value="Ribosomal_S12"/>
    <property type="match status" value="1"/>
</dbReference>
<dbReference type="FunFam" id="2.40.50.140:FF:000001">
    <property type="entry name" value="30S ribosomal protein S12"/>
    <property type="match status" value="1"/>
</dbReference>
<dbReference type="Gene3D" id="2.40.50.140">
    <property type="entry name" value="Nucleic acid-binding proteins"/>
    <property type="match status" value="1"/>
</dbReference>
<dbReference type="HAMAP" id="MF_00403_B">
    <property type="entry name" value="Ribosomal_uS12_B"/>
    <property type="match status" value="1"/>
</dbReference>
<dbReference type="InterPro" id="IPR012340">
    <property type="entry name" value="NA-bd_OB-fold"/>
</dbReference>
<dbReference type="InterPro" id="IPR006032">
    <property type="entry name" value="Ribosomal_uS12"/>
</dbReference>
<dbReference type="InterPro" id="IPR005679">
    <property type="entry name" value="Ribosomal_uS12_bac"/>
</dbReference>
<dbReference type="NCBIfam" id="TIGR00981">
    <property type="entry name" value="rpsL_bact"/>
    <property type="match status" value="1"/>
</dbReference>
<dbReference type="PANTHER" id="PTHR11652">
    <property type="entry name" value="30S RIBOSOMAL PROTEIN S12 FAMILY MEMBER"/>
    <property type="match status" value="1"/>
</dbReference>
<dbReference type="Pfam" id="PF00164">
    <property type="entry name" value="Ribosom_S12_S23"/>
    <property type="match status" value="1"/>
</dbReference>
<dbReference type="PIRSF" id="PIRSF002133">
    <property type="entry name" value="Ribosomal_S12/S23"/>
    <property type="match status" value="1"/>
</dbReference>
<dbReference type="PRINTS" id="PR01034">
    <property type="entry name" value="RIBOSOMALS12"/>
</dbReference>
<dbReference type="SUPFAM" id="SSF50249">
    <property type="entry name" value="Nucleic acid-binding proteins"/>
    <property type="match status" value="1"/>
</dbReference>
<dbReference type="PROSITE" id="PS00055">
    <property type="entry name" value="RIBOSOMAL_S12"/>
    <property type="match status" value="1"/>
</dbReference>
<name>RS12_HELPY</name>
<organism>
    <name type="scientific">Helicobacter pylori (strain ATCC 700392 / 26695)</name>
    <name type="common">Campylobacter pylori</name>
    <dbReference type="NCBI Taxonomy" id="85962"/>
    <lineage>
        <taxon>Bacteria</taxon>
        <taxon>Pseudomonadati</taxon>
        <taxon>Campylobacterota</taxon>
        <taxon>Epsilonproteobacteria</taxon>
        <taxon>Campylobacterales</taxon>
        <taxon>Helicobacteraceae</taxon>
        <taxon>Helicobacter</taxon>
    </lineage>
</organism>
<evidence type="ECO:0000250" key="1"/>
<evidence type="ECO:0000256" key="2">
    <source>
        <dbReference type="SAM" id="MobiDB-lite"/>
    </source>
</evidence>
<evidence type="ECO:0000305" key="3"/>
<gene>
    <name type="primary">rpsL</name>
    <name type="ordered locus">HP_1197</name>
</gene>
<sequence>MPTINQLIRKERKKVVKKTKSPALVECPQRRGVCTRVYTTTPKKPNSALRKVAKVRLTSKFEVISYIPGEGHNLQEHSIVLVRGGRVKDLPGVKYHIVRGALDTAGVNKRTVSRSKYGTKKAKATDKKATDNKKK</sequence>
<reference key="1">
    <citation type="journal article" date="1997" name="Nature">
        <title>The complete genome sequence of the gastric pathogen Helicobacter pylori.</title>
        <authorList>
            <person name="Tomb J.-F."/>
            <person name="White O."/>
            <person name="Kerlavage A.R."/>
            <person name="Clayton R.A."/>
            <person name="Sutton G.G."/>
            <person name="Fleischmann R.D."/>
            <person name="Ketchum K.A."/>
            <person name="Klenk H.-P."/>
            <person name="Gill S.R."/>
            <person name="Dougherty B.A."/>
            <person name="Nelson K.E."/>
            <person name="Quackenbush J."/>
            <person name="Zhou L."/>
            <person name="Kirkness E.F."/>
            <person name="Peterson S.N."/>
            <person name="Loftus B.J."/>
            <person name="Richardson D.L."/>
            <person name="Dodson R.J."/>
            <person name="Khalak H.G."/>
            <person name="Glodek A."/>
            <person name="McKenney K."/>
            <person name="FitzGerald L.M."/>
            <person name="Lee N."/>
            <person name="Adams M.D."/>
            <person name="Hickey E.K."/>
            <person name="Berg D.E."/>
            <person name="Gocayne J.D."/>
            <person name="Utterback T.R."/>
            <person name="Peterson J.D."/>
            <person name="Kelley J.M."/>
            <person name="Cotton M.D."/>
            <person name="Weidman J.F."/>
            <person name="Fujii C."/>
            <person name="Bowman C."/>
            <person name="Watthey L."/>
            <person name="Wallin E."/>
            <person name="Hayes W.S."/>
            <person name="Borodovsky M."/>
            <person name="Karp P.D."/>
            <person name="Smith H.O."/>
            <person name="Fraser C.M."/>
            <person name="Venter J.C."/>
        </authorList>
    </citation>
    <scope>NUCLEOTIDE SEQUENCE [LARGE SCALE GENOMIC DNA]</scope>
    <source>
        <strain>ATCC 700392 / 26695</strain>
    </source>
</reference>
<reference key="2">
    <citation type="submission" date="1997-04" db="EMBL/GenBank/DDBJ databases">
        <title>Mutations affecting the colonizing-potential of Helicobacter pylori map within the cag pathogenicity island.</title>
        <authorList>
            <person name="Marchetti M."/>
            <person name="Censini S."/>
            <person name="Ghiara P."/>
            <person name="Rappuoli R."/>
            <person name="Covacci A."/>
        </authorList>
    </citation>
    <scope>NUCLEOTIDE SEQUENCE [GENOMIC DNA] (OF A STREPTOMYCIN RESISTANT VARIANT)</scope>
    <source>
        <strain>DSM 4867 / CCUG 17874 / NCTC 11638</strain>
    </source>
</reference>
<reference key="3">
    <citation type="journal article" date="2013" name="Nucleic Acids Res.">
        <title>A minimal bacterial RNase J-based degradosome is associated with translating ribosomes.</title>
        <authorList>
            <person name="Redko Y."/>
            <person name="Aubert S."/>
            <person name="Stachowicz A."/>
            <person name="Lenormand P."/>
            <person name="Namane A."/>
            <person name="Darfeuille F."/>
            <person name="Thibonnier M."/>
            <person name="De Reuse H."/>
        </authorList>
    </citation>
    <scope>IDENTIFICATION BY MASS SPECTROMETRY</scope>
    <source>
        <strain>ATCC 700392 / 26695</strain>
    </source>
</reference>
<keyword id="KW-0046">Antibiotic resistance</keyword>
<keyword id="KW-0488">Methylation</keyword>
<keyword id="KW-1185">Reference proteome</keyword>
<keyword id="KW-0687">Ribonucleoprotein</keyword>
<keyword id="KW-0689">Ribosomal protein</keyword>
<keyword id="KW-0694">RNA-binding</keyword>
<keyword id="KW-0699">rRNA-binding</keyword>
<keyword id="KW-0820">tRNA-binding</keyword>
<comment type="function">
    <text evidence="1">With S4 and S5 plays an important role in translational accuracy.</text>
</comment>
<comment type="function">
    <text evidence="1">Interacts with and stabilizes bases of the 16S rRNA that are involved in tRNA selection in the A site and with the mRNA backbone. Located at the interface of the 30S and 50S subunits, it traverses the body of the 30S subunit contacting proteins on the other side and probably holding the rRNA structure together. The combined cluster of proteins S8, S12 and S17 appears to hold together the shoulder and platform of the 30S subunit (By similarity).</text>
</comment>
<comment type="subunit">
    <text evidence="1">Part of the 30S ribosomal subunit. Contacts proteins S8 and S17. May interact with IF1 in the 30S initiation complex (By similarity).</text>
</comment>
<comment type="interaction">
    <interactant intactId="EBI-7607319">
        <id>P0A0X4</id>
    </interactant>
    <interactant intactId="EBI-7605525">
        <id>O25687</id>
        <label>rimP</label>
    </interactant>
    <organismsDiffer>false</organismsDiffer>
    <experiments>3</experiments>
</comment>
<comment type="similarity">
    <text evidence="3">Belongs to the universal ribosomal protein uS12 family.</text>
</comment>
<protein>
    <recommendedName>
        <fullName evidence="3">Small ribosomal subunit protein uS12</fullName>
    </recommendedName>
    <alternativeName>
        <fullName>30S ribosomal protein S12</fullName>
    </alternativeName>
</protein>
<accession>P0A0X4</accession>
<accession>P56019</accession>
<accession>Q9R787</accession>